<keyword id="KW-0903">Direct protein sequencing</keyword>
<keyword id="KW-1185">Reference proteome</keyword>
<name>UP04_BOMMO</name>
<protein>
    <recommendedName>
        <fullName>Unknown protein 4 from 2D-page</fullName>
    </recommendedName>
</protein>
<feature type="chain" id="PRO_0000274259" description="Unknown protein 4 from 2D-page">
    <location>
        <begin position="1"/>
        <end position="10" status="greater than"/>
    </location>
</feature>
<feature type="non-terminal residue" evidence="2">
    <location>
        <position position="10"/>
    </location>
</feature>
<sequence length="10" mass="1119">DAMMNQAVXE</sequence>
<evidence type="ECO:0000269" key="1">
    <source>
    </source>
</evidence>
<evidence type="ECO:0000303" key="2">
    <source>
    </source>
</evidence>
<evidence type="ECO:0000305" key="3"/>
<dbReference type="InParanoid" id="P82202"/>
<dbReference type="Proteomes" id="UP000005204">
    <property type="component" value="Unassembled WGS sequence"/>
</dbReference>
<accession>P82202</accession>
<organism>
    <name type="scientific">Bombyx mori</name>
    <name type="common">Silk moth</name>
    <dbReference type="NCBI Taxonomy" id="7091"/>
    <lineage>
        <taxon>Eukaryota</taxon>
        <taxon>Metazoa</taxon>
        <taxon>Ecdysozoa</taxon>
        <taxon>Arthropoda</taxon>
        <taxon>Hexapoda</taxon>
        <taxon>Insecta</taxon>
        <taxon>Pterygota</taxon>
        <taxon>Neoptera</taxon>
        <taxon>Endopterygota</taxon>
        <taxon>Lepidoptera</taxon>
        <taxon>Glossata</taxon>
        <taxon>Ditrysia</taxon>
        <taxon>Bombycoidea</taxon>
        <taxon>Bombycidae</taxon>
        <taxon>Bombycinae</taxon>
        <taxon>Bombyx</taxon>
    </lineage>
</organism>
<proteinExistence type="evidence at protein level"/>
<reference evidence="3" key="1">
    <citation type="journal article" date="2001" name="Yi Chuan Xue Bao">
        <title>Protein database for several tissues derived from five instar of silkworm.</title>
        <authorList>
            <person name="Zhong B.-X."/>
        </authorList>
    </citation>
    <scope>PROTEIN SEQUENCE</scope>
    <source>
        <strain evidence="1">Xinhang X Keming</strain>
        <tissue evidence="1">Body wall</tissue>
        <tissue evidence="1">Fat body</tissue>
    </source>
</reference>